<evidence type="ECO:0000255" key="1">
    <source>
        <dbReference type="HAMAP-Rule" id="MF_04004"/>
    </source>
</evidence>
<evidence type="ECO:0000269" key="2">
    <source>
    </source>
</evidence>
<feature type="chain" id="PRO_0000133454" description="Protein E7">
    <location>
        <begin position="1"/>
        <end position="98"/>
    </location>
</feature>
<feature type="zinc finger region" evidence="1">
    <location>
        <begin position="59"/>
        <end position="95"/>
    </location>
</feature>
<feature type="region of interest" description="E7 terminal domain" evidence="1">
    <location>
        <begin position="1"/>
        <end position="41"/>
    </location>
</feature>
<feature type="short sequence motif" description="LXCXE motif; interaction with host RB1 and TMEM173/STING" evidence="1">
    <location>
        <begin position="22"/>
        <end position="26"/>
    </location>
</feature>
<feature type="short sequence motif" description="Nuclear export signal" evidence="1">
    <location>
        <begin position="77"/>
        <end position="85"/>
    </location>
</feature>
<feature type="cross-link" description="Peptide (Met-Gly) (interchain with G-Cter in ubiquitin); by host" evidence="2">
    <location>
        <position position="1"/>
    </location>
</feature>
<proteinExistence type="evidence at protein level"/>
<gene>
    <name evidence="1" type="primary">E7</name>
</gene>
<dbReference type="EMBL" id="D90400">
    <property type="protein sequence ID" value="BAA31846.1"/>
    <property type="molecule type" value="Genomic_DNA"/>
</dbReference>
<dbReference type="PIR" id="F36779">
    <property type="entry name" value="W7WL58"/>
</dbReference>
<dbReference type="SMR" id="P26557"/>
<dbReference type="Proteomes" id="UP000007668">
    <property type="component" value="Genome"/>
</dbReference>
<dbReference type="GO" id="GO:0030430">
    <property type="term" value="C:host cell cytoplasm"/>
    <property type="evidence" value="ECO:0007669"/>
    <property type="project" value="UniProtKB-SubCell"/>
</dbReference>
<dbReference type="GO" id="GO:0042025">
    <property type="term" value="C:host cell nucleus"/>
    <property type="evidence" value="ECO:0007669"/>
    <property type="project" value="UniProtKB-SubCell"/>
</dbReference>
<dbReference type="GO" id="GO:0003677">
    <property type="term" value="F:DNA binding"/>
    <property type="evidence" value="ECO:0007669"/>
    <property type="project" value="UniProtKB-UniRule"/>
</dbReference>
<dbReference type="GO" id="GO:0003700">
    <property type="term" value="F:DNA-binding transcription factor activity"/>
    <property type="evidence" value="ECO:0007669"/>
    <property type="project" value="UniProtKB-UniRule"/>
</dbReference>
<dbReference type="GO" id="GO:0019904">
    <property type="term" value="F:protein domain specific binding"/>
    <property type="evidence" value="ECO:0007669"/>
    <property type="project" value="UniProtKB-UniRule"/>
</dbReference>
<dbReference type="GO" id="GO:0008270">
    <property type="term" value="F:zinc ion binding"/>
    <property type="evidence" value="ECO:0007669"/>
    <property type="project" value="UniProtKB-KW"/>
</dbReference>
<dbReference type="GO" id="GO:0006351">
    <property type="term" value="P:DNA-templated transcription"/>
    <property type="evidence" value="ECO:0007669"/>
    <property type="project" value="UniProtKB-UniRule"/>
</dbReference>
<dbReference type="GO" id="GO:0039645">
    <property type="term" value="P:symbiont-mediated perturbation of host cell cycle G1/S transition checkpoint"/>
    <property type="evidence" value="ECO:0007669"/>
    <property type="project" value="UniProtKB-UniRule"/>
</dbReference>
<dbReference type="GO" id="GO:0052170">
    <property type="term" value="P:symbiont-mediated suppression of host innate immune response"/>
    <property type="evidence" value="ECO:0007669"/>
    <property type="project" value="UniProtKB-KW"/>
</dbReference>
<dbReference type="GO" id="GO:0039502">
    <property type="term" value="P:symbiont-mediated suppression of host type I interferon-mediated signaling pathway"/>
    <property type="evidence" value="ECO:0007669"/>
    <property type="project" value="UniProtKB-UniRule"/>
</dbReference>
<dbReference type="Gene3D" id="3.30.160.330">
    <property type="match status" value="1"/>
</dbReference>
<dbReference type="HAMAP" id="MF_04004">
    <property type="entry name" value="PPV_E7"/>
    <property type="match status" value="1"/>
</dbReference>
<dbReference type="InterPro" id="IPR000148">
    <property type="entry name" value="Papilloma_E7"/>
</dbReference>
<dbReference type="Pfam" id="PF00527">
    <property type="entry name" value="E7"/>
    <property type="match status" value="1"/>
</dbReference>
<dbReference type="PIRSF" id="PIRSF003407">
    <property type="entry name" value="Papvi_E7"/>
    <property type="match status" value="1"/>
</dbReference>
<dbReference type="SUPFAM" id="SSF161234">
    <property type="entry name" value="E7 C-terminal domain-like"/>
    <property type="match status" value="1"/>
</dbReference>
<reference key="1">
    <citation type="journal article" date="1991" name="Virology">
        <title>Human papillomavirus type 58 DNA sequence.</title>
        <authorList>
            <person name="Kirii Y."/>
            <person name="Iwamoto S."/>
            <person name="Matsukura T."/>
        </authorList>
    </citation>
    <scope>NUCLEOTIDE SEQUENCE [GENOMIC DNA]</scope>
</reference>
<reference key="2">
    <citation type="journal article" date="2004" name="J. Biol. Chem.">
        <title>The tumor suppressor protein p16(INK4a) and the human papillomavirus oncoprotein-58 E7 are naturally occurring lysine-less proteins that are degraded by the ubiquitin system. Direct evidence for ubiquitination at the N-terminal residue.</title>
        <authorList>
            <person name="Ben-Saadon R."/>
            <person name="Fajerman I."/>
            <person name="Ziv T."/>
            <person name="Hellman U."/>
            <person name="Schwartz A.L."/>
            <person name="Ciechanover A."/>
        </authorList>
    </citation>
    <scope>UBIQUITINATION AT MET-1</scope>
</reference>
<reference key="3">
    <citation type="journal article" date="2002" name="Rev. Med. Virol.">
        <title>Interactions of SV40 large T antigen and other viral proteins with retinoblastoma tumour suppressor.</title>
        <authorList>
            <person name="Lee C."/>
            <person name="Cho Y."/>
        </authorList>
    </citation>
    <scope>REVIEW</scope>
</reference>
<organismHost>
    <name type="scientific">Homo sapiens</name>
    <name type="common">Human</name>
    <dbReference type="NCBI Taxonomy" id="9606"/>
</organismHost>
<keyword id="KW-0010">Activator</keyword>
<keyword id="KW-0238">DNA-binding</keyword>
<keyword id="KW-0244">Early protein</keyword>
<keyword id="KW-1078">G1/S host cell cycle checkpoint dysregulation by virus</keyword>
<keyword id="KW-1035">Host cytoplasm</keyword>
<keyword id="KW-1048">Host nucleus</keyword>
<keyword id="KW-0945">Host-virus interaction</keyword>
<keyword id="KW-1090">Inhibition of host innate immune response by virus</keyword>
<keyword id="KW-1114">Inhibition of host interferon signaling pathway by virus</keyword>
<keyword id="KW-0922">Interferon antiviral system evasion</keyword>
<keyword id="KW-0479">Metal-binding</keyword>
<keyword id="KW-1121">Modulation of host cell cycle by virus</keyword>
<keyword id="KW-0553">Oncogene</keyword>
<keyword id="KW-0804">Transcription</keyword>
<keyword id="KW-0805">Transcription regulation</keyword>
<keyword id="KW-0832">Ubl conjugation</keyword>
<keyword id="KW-0899">Viral immunoevasion</keyword>
<keyword id="KW-0862">Zinc</keyword>
<keyword id="KW-0863">Zinc-finger</keyword>
<accession>P26557</accession>
<name>VE7_HPV58</name>
<organism>
    <name type="scientific">Human papillomavirus 58</name>
    <dbReference type="NCBI Taxonomy" id="10598"/>
    <lineage>
        <taxon>Viruses</taxon>
        <taxon>Monodnaviria</taxon>
        <taxon>Shotokuvirae</taxon>
        <taxon>Cossaviricota</taxon>
        <taxon>Papovaviricetes</taxon>
        <taxon>Zurhausenvirales</taxon>
        <taxon>Papillomaviridae</taxon>
        <taxon>Firstpapillomavirinae</taxon>
        <taxon>Alphapapillomavirus</taxon>
        <taxon>Alphapapillomavirus 9</taxon>
    </lineage>
</organism>
<comment type="function">
    <text evidence="1">Plays a role in viral genome replication by driving entry of quiescent cells into the cell cycle. Stimulation of progression from G1 to S phase allows the virus to efficiently use the cellular DNA replicating machinery to achieve viral genome replication. E7 protein has both transforming and trans-activating activities. Induces the disassembly of the E2F1 transcription factor from RB1, with subsequent transcriptional activation of E2F1-regulated S-phase genes. Interferes with host histone deacetylation mediated by HDAC1 and HDAC2, leading to transcription activation. Also plays a role in the inhibition of both antiviral and antiproliferative functions of host interferon alpha. Interaction with host TMEM173/STING impairs the ability of TMEM173/STING to sense cytosolic DNA and promote the production of type I interferon (IFN-alpha and IFN-beta).</text>
</comment>
<comment type="subunit">
    <text evidence="1">Homodimer. Homooligomer. Interacts with host RB1; this interaction induces dissociation of RB1-E2F1 complex thereby disrupting RB1 activity. Interacts with host EP300; this interaction represses EP300 transcriptional activity. Interacts with protein E2; this interaction inhibits E7 oncogenic activity. Interacts with host TMEM173/STING; this interaction impairs the ability of TMEM173/STING to sense cytosolic DNA and promote the production of type I interferon (IFN-alpha and IFN-beta).</text>
</comment>
<comment type="subcellular location">
    <subcellularLocation>
        <location evidence="1">Host cytoplasm</location>
    </subcellularLocation>
    <subcellularLocation>
        <location evidence="1">Host nucleus</location>
    </subcellularLocation>
    <text evidence="1">Predominantly found in the host nucleus.</text>
</comment>
<comment type="domain">
    <text evidence="1">The E7 terminal domain is an intrinsically disordered domain, whose flexibility and conformational transitions confer target adaptability to the oncoprotein. It allows adaptation to a variety of protein targets and exposes the PEST degradation sequence that regulates its turnover in the cell.</text>
</comment>
<comment type="PTM">
    <text evidence="1">Highly phosphorylated.</text>
</comment>
<comment type="similarity">
    <text evidence="1">Belongs to the papillomaviridae E7 protein family.</text>
</comment>
<protein>
    <recommendedName>
        <fullName evidence="1">Protein E7</fullName>
    </recommendedName>
</protein>
<sequence>MRGNNPTLREYILDLHPEPTDLFCYEQLCDSSDEDEIGLDGPDGQAQPATANYYIVTCCYTCGTTVRLCINSTTTDVRTLQQLLMGTCTIVCPSCAQQ</sequence>